<comment type="function">
    <text evidence="2">DNA-binding protein that specifically recognizes consensus sequences at the breakpoint junctions in chromosomal translocations, mostly involving immunoglobulin (Ig)/T-cell receptor gene segments. Seems to recognize single-stranded DNA ends generated by staggered breaks occurring at recombination hot spots.</text>
</comment>
<comment type="function">
    <text evidence="3">Exhibits both single-stranded and double-stranded endoribonuclease activity. May act as an activator of RNA-induced silencing complex (RISC) by facilitating endonucleolytic cleavage of the siRNA passenger strand.</text>
</comment>
<comment type="subunit">
    <text evidence="2">Ring-shaped heterooctamer of six TSN and two TSNAX subunits, DNA/RNA binding occurs inside the ring.</text>
</comment>
<comment type="subcellular location">
    <subcellularLocation>
        <location evidence="2">Cytoplasm</location>
    </subcellularLocation>
    <subcellularLocation>
        <location evidence="2">Nucleus</location>
    </subcellularLocation>
</comment>
<comment type="similarity">
    <text evidence="5">Belongs to the translin family.</text>
</comment>
<organism>
    <name type="scientific">Bos taurus</name>
    <name type="common">Bovine</name>
    <dbReference type="NCBI Taxonomy" id="9913"/>
    <lineage>
        <taxon>Eukaryota</taxon>
        <taxon>Metazoa</taxon>
        <taxon>Chordata</taxon>
        <taxon>Craniata</taxon>
        <taxon>Vertebrata</taxon>
        <taxon>Euteleostomi</taxon>
        <taxon>Mammalia</taxon>
        <taxon>Eutheria</taxon>
        <taxon>Laurasiatheria</taxon>
        <taxon>Artiodactyla</taxon>
        <taxon>Ruminantia</taxon>
        <taxon>Pecora</taxon>
        <taxon>Bovidae</taxon>
        <taxon>Bovinae</taxon>
        <taxon>Bos</taxon>
    </lineage>
</organism>
<feature type="chain" id="PRO_0000270209" description="Translin">
    <location>
        <begin position="1"/>
        <end position="228"/>
    </location>
</feature>
<feature type="region of interest" description="DNA/RNA binding" evidence="1">
    <location>
        <begin position="86"/>
        <end position="90"/>
    </location>
</feature>
<feature type="region of interest" description="Leucine-zipper" evidence="4">
    <location>
        <begin position="177"/>
        <end position="198"/>
    </location>
</feature>
<feature type="modified residue" description="N6-acetyllysine" evidence="2">
    <location>
        <position position="187"/>
    </location>
</feature>
<feature type="modified residue" description="Phosphoserine" evidence="2">
    <location>
        <position position="190"/>
    </location>
</feature>
<feature type="modified residue" description="N6-acetyllysine" evidence="2">
    <location>
        <position position="199"/>
    </location>
</feature>
<reference key="1">
    <citation type="journal article" date="2005" name="BMC Genomics">
        <title>Characterization of 954 bovine full-CDS cDNA sequences.</title>
        <authorList>
            <person name="Harhay G.P."/>
            <person name="Sonstegard T.S."/>
            <person name="Keele J.W."/>
            <person name="Heaton M.P."/>
            <person name="Clawson M.L."/>
            <person name="Snelling W.M."/>
            <person name="Wiedmann R.T."/>
            <person name="Van Tassell C.P."/>
            <person name="Smith T.P.L."/>
        </authorList>
    </citation>
    <scope>NUCLEOTIDE SEQUENCE [LARGE SCALE MRNA]</scope>
</reference>
<reference key="2">
    <citation type="submission" date="2006-09" db="EMBL/GenBank/DDBJ databases">
        <authorList>
            <consortium name="NIH - Mammalian Gene Collection (MGC) project"/>
        </authorList>
    </citation>
    <scope>NUCLEOTIDE SEQUENCE [LARGE SCALE MRNA]</scope>
    <source>
        <strain>Hereford</strain>
        <tissue>Brain cortex</tissue>
    </source>
</reference>
<gene>
    <name type="primary">TSN</name>
</gene>
<sequence length="228" mass="26169">MSVSEIFVELQGFLAAEQDIREEIRKVVQSLEQTAREILTLLQGVHQGAGFQDIPKRCLKAREHFGTVKTHLTSLKTKFPAEQYYRFHEHWRFVLQRLVFLAAFVVYLESETLVTREAVTEILGIEPDREKGFHLDVEDYLSGVLILASELSRLSVNSVTAGDYSRPLHISTFINELDSGFRLLNLKNDSLRKRYDGLKYDVKKVEEVVYDLSIRGFNKETAAACVEK</sequence>
<keyword id="KW-0007">Acetylation</keyword>
<keyword id="KW-0963">Cytoplasm</keyword>
<keyword id="KW-0238">DNA-binding</keyword>
<keyword id="KW-0255">Endonuclease</keyword>
<keyword id="KW-0378">Hydrolase</keyword>
<keyword id="KW-0540">Nuclease</keyword>
<keyword id="KW-0539">Nucleus</keyword>
<keyword id="KW-0597">Phosphoprotein</keyword>
<keyword id="KW-1185">Reference proteome</keyword>
<keyword id="KW-0694">RNA-binding</keyword>
<accession>Q08DM8</accession>
<accession>A1L5B5</accession>
<evidence type="ECO:0000250" key="1"/>
<evidence type="ECO:0000250" key="2">
    <source>
        <dbReference type="UniProtKB" id="Q15631"/>
    </source>
</evidence>
<evidence type="ECO:0000250" key="3">
    <source>
        <dbReference type="UniProtKB" id="Q62348"/>
    </source>
</evidence>
<evidence type="ECO:0000255" key="4"/>
<evidence type="ECO:0000305" key="5"/>
<protein>
    <recommendedName>
        <fullName>Translin</fullName>
        <ecNumber evidence="3">3.1.-.-</ecNumber>
    </recommendedName>
    <alternativeName>
        <fullName>Component 3 of promoter of RISC</fullName>
        <shortName>C3PO</shortName>
    </alternativeName>
</protein>
<proteinExistence type="evidence at transcript level"/>
<name>TSN_BOVIN</name>
<dbReference type="EC" id="3.1.-.-" evidence="3"/>
<dbReference type="EMBL" id="BT029902">
    <property type="protein sequence ID" value="ABM06148.1"/>
    <property type="molecule type" value="mRNA"/>
</dbReference>
<dbReference type="EMBL" id="BC123663">
    <property type="protein sequence ID" value="AAI23664.1"/>
    <property type="molecule type" value="mRNA"/>
</dbReference>
<dbReference type="RefSeq" id="NP_001068890.1">
    <property type="nucleotide sequence ID" value="NM_001075422.1"/>
</dbReference>
<dbReference type="SMR" id="Q08DM8"/>
<dbReference type="FunCoup" id="Q08DM8">
    <property type="interactions" value="4682"/>
</dbReference>
<dbReference type="STRING" id="9913.ENSBTAP00000059780"/>
<dbReference type="PaxDb" id="9913-ENSBTAP00000007959"/>
<dbReference type="Ensembl" id="ENSBTAT00000069948.2">
    <property type="protein sequence ID" value="ENSBTAP00000059780.1"/>
    <property type="gene ID" value="ENSBTAG00000006059.6"/>
</dbReference>
<dbReference type="GeneID" id="509943"/>
<dbReference type="KEGG" id="bta:509943"/>
<dbReference type="CTD" id="7247"/>
<dbReference type="VEuPathDB" id="HostDB:ENSBTAG00000006059"/>
<dbReference type="VGNC" id="VGNC:36422">
    <property type="gene designation" value="TSN"/>
</dbReference>
<dbReference type="eggNOG" id="KOG3067">
    <property type="taxonomic scope" value="Eukaryota"/>
</dbReference>
<dbReference type="GeneTree" id="ENSGT00940000153568"/>
<dbReference type="HOGENOM" id="CLU_079179_0_0_1"/>
<dbReference type="InParanoid" id="Q08DM8"/>
<dbReference type="OMA" id="DAFHFTI"/>
<dbReference type="OrthoDB" id="829at2759"/>
<dbReference type="TreeFam" id="TF323690"/>
<dbReference type="Reactome" id="R-BTA-426486">
    <property type="pathway name" value="Small interfering RNA (siRNA) biogenesis"/>
</dbReference>
<dbReference type="Proteomes" id="UP000009136">
    <property type="component" value="Chromosome 2"/>
</dbReference>
<dbReference type="Bgee" id="ENSBTAG00000006059">
    <property type="expression patterns" value="Expressed in choroid plexus and 104 other cell types or tissues"/>
</dbReference>
<dbReference type="GO" id="GO:0005737">
    <property type="term" value="C:cytoplasm"/>
    <property type="evidence" value="ECO:0000318"/>
    <property type="project" value="GO_Central"/>
</dbReference>
<dbReference type="GO" id="GO:0005783">
    <property type="term" value="C:endoplasmic reticulum"/>
    <property type="evidence" value="ECO:0007669"/>
    <property type="project" value="Ensembl"/>
</dbReference>
<dbReference type="GO" id="GO:1902555">
    <property type="term" value="C:endoribonuclease complex"/>
    <property type="evidence" value="ECO:0007669"/>
    <property type="project" value="Ensembl"/>
</dbReference>
<dbReference type="GO" id="GO:0005654">
    <property type="term" value="C:nucleoplasm"/>
    <property type="evidence" value="ECO:0007669"/>
    <property type="project" value="Ensembl"/>
</dbReference>
<dbReference type="GO" id="GO:0005634">
    <property type="term" value="C:nucleus"/>
    <property type="evidence" value="ECO:0000318"/>
    <property type="project" value="GO_Central"/>
</dbReference>
<dbReference type="GO" id="GO:0004519">
    <property type="term" value="F:endonuclease activity"/>
    <property type="evidence" value="ECO:0007669"/>
    <property type="project" value="UniProtKB-KW"/>
</dbReference>
<dbReference type="GO" id="GO:0042802">
    <property type="term" value="F:identical protein binding"/>
    <property type="evidence" value="ECO:0007669"/>
    <property type="project" value="Ensembl"/>
</dbReference>
<dbReference type="GO" id="GO:0003723">
    <property type="term" value="F:RNA binding"/>
    <property type="evidence" value="ECO:0000318"/>
    <property type="project" value="GO_Central"/>
</dbReference>
<dbReference type="GO" id="GO:0043565">
    <property type="term" value="F:sequence-specific DNA binding"/>
    <property type="evidence" value="ECO:0007669"/>
    <property type="project" value="InterPro"/>
</dbReference>
<dbReference type="GO" id="GO:0003697">
    <property type="term" value="F:single-stranded DNA binding"/>
    <property type="evidence" value="ECO:0007669"/>
    <property type="project" value="InterPro"/>
</dbReference>
<dbReference type="GO" id="GO:0030422">
    <property type="term" value="P:siRNA processing"/>
    <property type="evidence" value="ECO:0007669"/>
    <property type="project" value="Ensembl"/>
</dbReference>
<dbReference type="CDD" id="cd14819">
    <property type="entry name" value="Translin"/>
    <property type="match status" value="1"/>
</dbReference>
<dbReference type="FunFam" id="1.20.58.200:FF:000002">
    <property type="entry name" value="Putative translin"/>
    <property type="match status" value="1"/>
</dbReference>
<dbReference type="FunFam" id="1.20.58.190:FF:000001">
    <property type="entry name" value="Translin"/>
    <property type="match status" value="1"/>
</dbReference>
<dbReference type="Gene3D" id="1.20.58.190">
    <property type="entry name" value="Translin, domain 1"/>
    <property type="match status" value="1"/>
</dbReference>
<dbReference type="Gene3D" id="1.20.58.200">
    <property type="entry name" value="Translin, domain 2"/>
    <property type="match status" value="1"/>
</dbReference>
<dbReference type="InterPro" id="IPR033956">
    <property type="entry name" value="Translin"/>
</dbReference>
<dbReference type="InterPro" id="IPR016069">
    <property type="entry name" value="Translin_C"/>
</dbReference>
<dbReference type="InterPro" id="IPR002848">
    <property type="entry name" value="Translin_fam"/>
</dbReference>
<dbReference type="InterPro" id="IPR016068">
    <property type="entry name" value="Translin_N"/>
</dbReference>
<dbReference type="InterPro" id="IPR036081">
    <property type="entry name" value="Translin_sf"/>
</dbReference>
<dbReference type="PANTHER" id="PTHR10741">
    <property type="entry name" value="TRANSLIN AND TRANSLIN ASSOCIATED PROTEIN X"/>
    <property type="match status" value="1"/>
</dbReference>
<dbReference type="Pfam" id="PF01997">
    <property type="entry name" value="Translin"/>
    <property type="match status" value="1"/>
</dbReference>
<dbReference type="SUPFAM" id="SSF74784">
    <property type="entry name" value="Translin"/>
    <property type="match status" value="1"/>
</dbReference>